<sequence length="462" mass="54433">MFILIIKCGIMEKEVISSREFIDRFVECLEKGEDFKLKDCVVEGNVDILNIYEMIKDKELKGGYIEKKDDEIVVNINIKVDIYNVEFNGDFRFFVNMEYQIVISVFNGNAYFRVITFKGSVYFIRTIFNGDVDFIDTIFEENAYFSVTAFKGNIINFSGTIFNKESHFKSTTFEGNTYFSVTTFNIAEFYNSTFKSHVYFDDISFNLLSFTDCRFRDDVSFKKIDKENFKGLAIFLKTQFLNKHTTIENFQLSKTSFLKTDVREVLLCDVKKEEILSHKILRIKEDSGNKDKDLENKLKELLGLSYKYIIDQFNYKSVLAEYRNLRISIENNRTYIEASNLYKMEMELIKEFSNGRFEKFIIGAYGAISDYGESMEKTGKWILGSMILFTILASILRFKGMEWDIFKIIEFWWISFWEVIRLFLQIGTEDKSLWILEPIIRVTSLILLGNLYIAVRRKLSRK</sequence>
<dbReference type="EMBL" id="L77117">
    <property type="protein sequence ID" value="AAB99156.1"/>
    <property type="molecule type" value="Genomic_DNA"/>
</dbReference>
<dbReference type="PIR" id="B64443">
    <property type="entry name" value="B64443"/>
</dbReference>
<dbReference type="STRING" id="243232.MJ_1147"/>
<dbReference type="PaxDb" id="243232-MJ_1147"/>
<dbReference type="EnsemblBacteria" id="AAB99156">
    <property type="protein sequence ID" value="AAB99156"/>
    <property type="gene ID" value="MJ_1147"/>
</dbReference>
<dbReference type="KEGG" id="mja:MJ_1147"/>
<dbReference type="eggNOG" id="arCOG03128">
    <property type="taxonomic scope" value="Archaea"/>
</dbReference>
<dbReference type="HOGENOM" id="CLU_037290_0_0_2"/>
<dbReference type="InParanoid" id="Q58547"/>
<dbReference type="OrthoDB" id="66111at2157"/>
<dbReference type="Proteomes" id="UP000000805">
    <property type="component" value="Chromosome"/>
</dbReference>
<dbReference type="GO" id="GO:0005886">
    <property type="term" value="C:plasma membrane"/>
    <property type="evidence" value="ECO:0007669"/>
    <property type="project" value="UniProtKB-SubCell"/>
</dbReference>
<dbReference type="InterPro" id="IPR001646">
    <property type="entry name" value="5peptide_repeat"/>
</dbReference>
<dbReference type="Pfam" id="PF13576">
    <property type="entry name" value="Pentapeptide_3"/>
    <property type="match status" value="2"/>
</dbReference>
<proteinExistence type="predicted"/>
<accession>Q58547</accession>
<gene>
    <name type="ordered locus">MJ1147</name>
</gene>
<evidence type="ECO:0000255" key="1"/>
<evidence type="ECO:0000305" key="2"/>
<protein>
    <recommendedName>
        <fullName>Uncharacterized protein MJ1147</fullName>
    </recommendedName>
</protein>
<organism>
    <name type="scientific">Methanocaldococcus jannaschii (strain ATCC 43067 / DSM 2661 / JAL-1 / JCM 10045 / NBRC 100440)</name>
    <name type="common">Methanococcus jannaschii</name>
    <dbReference type="NCBI Taxonomy" id="243232"/>
    <lineage>
        <taxon>Archaea</taxon>
        <taxon>Methanobacteriati</taxon>
        <taxon>Methanobacteriota</taxon>
        <taxon>Methanomada group</taxon>
        <taxon>Methanococci</taxon>
        <taxon>Methanococcales</taxon>
        <taxon>Methanocaldococcaceae</taxon>
        <taxon>Methanocaldococcus</taxon>
    </lineage>
</organism>
<feature type="chain" id="PRO_0000107188" description="Uncharacterized protein MJ1147">
    <location>
        <begin position="1"/>
        <end position="462"/>
    </location>
</feature>
<feature type="transmembrane region" description="Helical" evidence="1">
    <location>
        <begin position="381"/>
        <end position="401"/>
    </location>
</feature>
<feature type="transmembrane region" description="Helical" evidence="1">
    <location>
        <begin position="433"/>
        <end position="453"/>
    </location>
</feature>
<comment type="subcellular location">
    <subcellularLocation>
        <location evidence="2">Cell membrane</location>
        <topology evidence="2">Multi-pass membrane protein</topology>
    </subcellularLocation>
</comment>
<reference key="1">
    <citation type="journal article" date="1996" name="Science">
        <title>Complete genome sequence of the methanogenic archaeon, Methanococcus jannaschii.</title>
        <authorList>
            <person name="Bult C.J."/>
            <person name="White O."/>
            <person name="Olsen G.J."/>
            <person name="Zhou L."/>
            <person name="Fleischmann R.D."/>
            <person name="Sutton G.G."/>
            <person name="Blake J.A."/>
            <person name="FitzGerald L.M."/>
            <person name="Clayton R.A."/>
            <person name="Gocayne J.D."/>
            <person name="Kerlavage A.R."/>
            <person name="Dougherty B.A."/>
            <person name="Tomb J.-F."/>
            <person name="Adams M.D."/>
            <person name="Reich C.I."/>
            <person name="Overbeek R."/>
            <person name="Kirkness E.F."/>
            <person name="Weinstock K.G."/>
            <person name="Merrick J.M."/>
            <person name="Glodek A."/>
            <person name="Scott J.L."/>
            <person name="Geoghagen N.S.M."/>
            <person name="Weidman J.F."/>
            <person name="Fuhrmann J.L."/>
            <person name="Nguyen D."/>
            <person name="Utterback T.R."/>
            <person name="Kelley J.M."/>
            <person name="Peterson J.D."/>
            <person name="Sadow P.W."/>
            <person name="Hanna M.C."/>
            <person name="Cotton M.D."/>
            <person name="Roberts K.M."/>
            <person name="Hurst M.A."/>
            <person name="Kaine B.P."/>
            <person name="Borodovsky M."/>
            <person name="Klenk H.-P."/>
            <person name="Fraser C.M."/>
            <person name="Smith H.O."/>
            <person name="Woese C.R."/>
            <person name="Venter J.C."/>
        </authorList>
    </citation>
    <scope>NUCLEOTIDE SEQUENCE [LARGE SCALE GENOMIC DNA]</scope>
    <source>
        <strain>ATCC 43067 / DSM 2661 / JAL-1 / JCM 10045 / NBRC 100440</strain>
    </source>
</reference>
<keyword id="KW-1003">Cell membrane</keyword>
<keyword id="KW-0472">Membrane</keyword>
<keyword id="KW-1185">Reference proteome</keyword>
<keyword id="KW-0812">Transmembrane</keyword>
<keyword id="KW-1133">Transmembrane helix</keyword>
<name>Y1147_METJA</name>